<organism>
    <name type="scientific">Burkholderia pseudomallei (strain 1710b)</name>
    <dbReference type="NCBI Taxonomy" id="320372"/>
    <lineage>
        <taxon>Bacteria</taxon>
        <taxon>Pseudomonadati</taxon>
        <taxon>Pseudomonadota</taxon>
        <taxon>Betaproteobacteria</taxon>
        <taxon>Burkholderiales</taxon>
        <taxon>Burkholderiaceae</taxon>
        <taxon>Burkholderia</taxon>
        <taxon>pseudomallei group</taxon>
    </lineage>
</organism>
<feature type="chain" id="PRO_0000257396" description="tRNA (guanine-N(1)-)-methyltransferase">
    <location>
        <begin position="1"/>
        <end position="264"/>
    </location>
</feature>
<feature type="binding site" evidence="1">
    <location>
        <position position="125"/>
    </location>
    <ligand>
        <name>S-adenosyl-L-methionine</name>
        <dbReference type="ChEBI" id="CHEBI:59789"/>
    </ligand>
</feature>
<feature type="binding site" evidence="1">
    <location>
        <begin position="145"/>
        <end position="150"/>
    </location>
    <ligand>
        <name>S-adenosyl-L-methionine</name>
        <dbReference type="ChEBI" id="CHEBI:59789"/>
    </ligand>
</feature>
<gene>
    <name evidence="1" type="primary">trmD</name>
    <name type="ordered locus">BURPS1710b_2966</name>
</gene>
<dbReference type="EC" id="2.1.1.228" evidence="1"/>
<dbReference type="EMBL" id="CP000124">
    <property type="protein sequence ID" value="ABA48757.1"/>
    <property type="molecule type" value="Genomic_DNA"/>
</dbReference>
<dbReference type="RefSeq" id="WP_004189914.1">
    <property type="nucleotide sequence ID" value="NC_007434.1"/>
</dbReference>
<dbReference type="SMR" id="Q3JQ08"/>
<dbReference type="EnsemblBacteria" id="ABA48757">
    <property type="protein sequence ID" value="ABA48757"/>
    <property type="gene ID" value="BURPS1710b_2966"/>
</dbReference>
<dbReference type="GeneID" id="93061077"/>
<dbReference type="KEGG" id="bpm:BURPS1710b_2966"/>
<dbReference type="HOGENOM" id="CLU_047363_0_2_4"/>
<dbReference type="Proteomes" id="UP000002700">
    <property type="component" value="Chromosome I"/>
</dbReference>
<dbReference type="GO" id="GO:0005829">
    <property type="term" value="C:cytosol"/>
    <property type="evidence" value="ECO:0007669"/>
    <property type="project" value="TreeGrafter"/>
</dbReference>
<dbReference type="GO" id="GO:0052906">
    <property type="term" value="F:tRNA (guanine(37)-N1)-methyltransferase activity"/>
    <property type="evidence" value="ECO:0007669"/>
    <property type="project" value="UniProtKB-UniRule"/>
</dbReference>
<dbReference type="GO" id="GO:0002939">
    <property type="term" value="P:tRNA N1-guanine methylation"/>
    <property type="evidence" value="ECO:0007669"/>
    <property type="project" value="TreeGrafter"/>
</dbReference>
<dbReference type="CDD" id="cd18080">
    <property type="entry name" value="TrmD-like"/>
    <property type="match status" value="1"/>
</dbReference>
<dbReference type="FunFam" id="1.10.1270.20:FF:000001">
    <property type="entry name" value="tRNA (guanine-N(1)-)-methyltransferase"/>
    <property type="match status" value="1"/>
</dbReference>
<dbReference type="FunFam" id="3.40.1280.10:FF:000001">
    <property type="entry name" value="tRNA (guanine-N(1)-)-methyltransferase"/>
    <property type="match status" value="1"/>
</dbReference>
<dbReference type="Gene3D" id="3.40.1280.10">
    <property type="match status" value="1"/>
</dbReference>
<dbReference type="Gene3D" id="1.10.1270.20">
    <property type="entry name" value="tRNA(m1g37)methyltransferase, domain 2"/>
    <property type="match status" value="1"/>
</dbReference>
<dbReference type="HAMAP" id="MF_00605">
    <property type="entry name" value="TrmD"/>
    <property type="match status" value="1"/>
</dbReference>
<dbReference type="InterPro" id="IPR029028">
    <property type="entry name" value="Alpha/beta_knot_MTases"/>
</dbReference>
<dbReference type="InterPro" id="IPR023148">
    <property type="entry name" value="tRNA_m1G_MeTrfase_C_sf"/>
</dbReference>
<dbReference type="InterPro" id="IPR002649">
    <property type="entry name" value="tRNA_m1G_MeTrfase_TrmD"/>
</dbReference>
<dbReference type="InterPro" id="IPR029026">
    <property type="entry name" value="tRNA_m1G_MTases_N"/>
</dbReference>
<dbReference type="InterPro" id="IPR016009">
    <property type="entry name" value="tRNA_MeTrfase_TRMD/TRM10"/>
</dbReference>
<dbReference type="NCBIfam" id="NF000648">
    <property type="entry name" value="PRK00026.1"/>
    <property type="match status" value="1"/>
</dbReference>
<dbReference type="NCBIfam" id="TIGR00088">
    <property type="entry name" value="trmD"/>
    <property type="match status" value="1"/>
</dbReference>
<dbReference type="PANTHER" id="PTHR46417">
    <property type="entry name" value="TRNA (GUANINE-N(1)-)-METHYLTRANSFERASE"/>
    <property type="match status" value="1"/>
</dbReference>
<dbReference type="PANTHER" id="PTHR46417:SF1">
    <property type="entry name" value="TRNA (GUANINE-N(1)-)-METHYLTRANSFERASE"/>
    <property type="match status" value="1"/>
</dbReference>
<dbReference type="Pfam" id="PF01746">
    <property type="entry name" value="tRNA_m1G_MT"/>
    <property type="match status" value="1"/>
</dbReference>
<dbReference type="PIRSF" id="PIRSF000386">
    <property type="entry name" value="tRNA_mtase"/>
    <property type="match status" value="1"/>
</dbReference>
<dbReference type="SUPFAM" id="SSF75217">
    <property type="entry name" value="alpha/beta knot"/>
    <property type="match status" value="1"/>
</dbReference>
<reference key="1">
    <citation type="journal article" date="2010" name="Genome Biol. Evol.">
        <title>Continuing evolution of Burkholderia mallei through genome reduction and large-scale rearrangements.</title>
        <authorList>
            <person name="Losada L."/>
            <person name="Ronning C.M."/>
            <person name="DeShazer D."/>
            <person name="Woods D."/>
            <person name="Fedorova N."/>
            <person name="Kim H.S."/>
            <person name="Shabalina S.A."/>
            <person name="Pearson T.R."/>
            <person name="Brinkac L."/>
            <person name="Tan P."/>
            <person name="Nandi T."/>
            <person name="Crabtree J."/>
            <person name="Badger J."/>
            <person name="Beckstrom-Sternberg S."/>
            <person name="Saqib M."/>
            <person name="Schutzer S.E."/>
            <person name="Keim P."/>
            <person name="Nierman W.C."/>
        </authorList>
    </citation>
    <scope>NUCLEOTIDE SEQUENCE [LARGE SCALE GENOMIC DNA]</scope>
    <source>
        <strain>1710b</strain>
    </source>
</reference>
<protein>
    <recommendedName>
        <fullName evidence="1">tRNA (guanine-N(1)-)-methyltransferase</fullName>
        <ecNumber evidence="1">2.1.1.228</ecNumber>
    </recommendedName>
    <alternativeName>
        <fullName evidence="1">M1G-methyltransferase</fullName>
    </alternativeName>
    <alternativeName>
        <fullName evidence="1">tRNA [GM37] methyltransferase</fullName>
    </alternativeName>
</protein>
<keyword id="KW-0963">Cytoplasm</keyword>
<keyword id="KW-0489">Methyltransferase</keyword>
<keyword id="KW-0949">S-adenosyl-L-methionine</keyword>
<keyword id="KW-0808">Transferase</keyword>
<keyword id="KW-0819">tRNA processing</keyword>
<name>TRMD_BURP1</name>
<comment type="function">
    <text evidence="1">Specifically methylates guanosine-37 in various tRNAs.</text>
</comment>
<comment type="catalytic activity">
    <reaction evidence="1">
        <text>guanosine(37) in tRNA + S-adenosyl-L-methionine = N(1)-methylguanosine(37) in tRNA + S-adenosyl-L-homocysteine + H(+)</text>
        <dbReference type="Rhea" id="RHEA:36899"/>
        <dbReference type="Rhea" id="RHEA-COMP:10145"/>
        <dbReference type="Rhea" id="RHEA-COMP:10147"/>
        <dbReference type="ChEBI" id="CHEBI:15378"/>
        <dbReference type="ChEBI" id="CHEBI:57856"/>
        <dbReference type="ChEBI" id="CHEBI:59789"/>
        <dbReference type="ChEBI" id="CHEBI:73542"/>
        <dbReference type="ChEBI" id="CHEBI:74269"/>
        <dbReference type="EC" id="2.1.1.228"/>
    </reaction>
</comment>
<comment type="subunit">
    <text evidence="1">Homodimer.</text>
</comment>
<comment type="subcellular location">
    <subcellularLocation>
        <location evidence="1">Cytoplasm</location>
    </subcellularLocation>
</comment>
<comment type="similarity">
    <text evidence="1">Belongs to the RNA methyltransferase TrmD family.</text>
</comment>
<accession>Q3JQ08</accession>
<sequence length="264" mass="29000">MDEATQSAIQFDVVTLFPEMFRALTDWGITSRAVKQGRFGLRTWNPRDFTTDNYRTVDDRPYGGGPGMVMLAKPLEAAIGAAKAAQAAQGVATSRVVMMSPQGAPLTHERVARMAAEPGVVLLCGRYEAIDQRLIDRCVDEELSLGDFVLSGGELPAMALMDAVVRLLPGVLNDAQSAVQDSFADGLLDCPHYTRPEEYEGVRVPDVLLGGHHAEIERWRRQEALRNTIAKRPDLIARARREKLLSRADEAWLASLAKEAKQAS</sequence>
<evidence type="ECO:0000255" key="1">
    <source>
        <dbReference type="HAMAP-Rule" id="MF_00605"/>
    </source>
</evidence>
<proteinExistence type="inferred from homology"/>